<proteinExistence type="evidence at transcript level"/>
<protein>
    <recommendedName>
        <fullName>Myelin-associated neurite-outgrowth inhibitor</fullName>
        <shortName>Mani</shortName>
    </recommendedName>
</protein>
<organism>
    <name type="scientific">Bos taurus</name>
    <name type="common">Bovine</name>
    <dbReference type="NCBI Taxonomy" id="9913"/>
    <lineage>
        <taxon>Eukaryota</taxon>
        <taxon>Metazoa</taxon>
        <taxon>Chordata</taxon>
        <taxon>Craniata</taxon>
        <taxon>Vertebrata</taxon>
        <taxon>Euteleostomi</taxon>
        <taxon>Mammalia</taxon>
        <taxon>Eutheria</taxon>
        <taxon>Laurasiatheria</taxon>
        <taxon>Artiodactyla</taxon>
        <taxon>Ruminantia</taxon>
        <taxon>Pecora</taxon>
        <taxon>Bovidae</taxon>
        <taxon>Bovinae</taxon>
        <taxon>Bos</taxon>
    </lineage>
</organism>
<gene>
    <name type="primary">FAM168B</name>
</gene>
<sequence length="195" mass="20284">MNPVYSPGSSGVPYANAKGIGYPAGFPMGYAAAAPAYSPNMYPGANPTFQAGYTSGTPYKVSCSPTSGAVPPYSSSPNPYQTAVYPVRSAYPQQSPYAQQGTYYTQPLYAAPPHVIHHTTVVQPNGMPATVYPAPLPPPRGNGVTMGMVAGTTMAMSAGTLLTAHSPTPVAPHPVTVPTYRAPGTPTYSYVPPQW</sequence>
<feature type="chain" id="PRO_0000325977" description="Myelin-associated neurite-outgrowth inhibitor">
    <location>
        <begin position="1"/>
        <end position="195"/>
    </location>
</feature>
<feature type="topological domain" description="Cytoplasmic" evidence="4">
    <location>
        <begin position="1"/>
        <end position="18"/>
    </location>
</feature>
<feature type="transmembrane region" description="Helical" evidence="4">
    <location>
        <begin position="19"/>
        <end position="42"/>
    </location>
</feature>
<feature type="topological domain" description="Extracellular" evidence="4">
    <location>
        <begin position="43"/>
        <end position="142"/>
    </location>
</feature>
<feature type="transmembrane region" description="Helical" evidence="4">
    <location>
        <begin position="143"/>
        <end position="164"/>
    </location>
</feature>
<feature type="topological domain" description="Cytoplasmic" evidence="4">
    <location>
        <begin position="165"/>
        <end position="195"/>
    </location>
</feature>
<feature type="modified residue" description="N-acetylmethionine" evidence="1">
    <location>
        <position position="1"/>
    </location>
</feature>
<feature type="modified residue" description="Phosphoserine" evidence="1">
    <location>
        <position position="6"/>
    </location>
</feature>
<feature type="glycosylation site" description="N-linked (GlcNAc...) asparagine" evidence="4">
    <location>
        <position position="46"/>
    </location>
</feature>
<feature type="splice variant" id="VSP_043988" description="In isoform 2." evidence="5">
    <location>
        <begin position="24"/>
        <end position="51"/>
    </location>
</feature>
<name>F168B_BOVIN</name>
<accession>A8E639</accession>
<accession>F1MAZ2</accession>
<evidence type="ECO:0000250" key="1">
    <source>
        <dbReference type="UniProtKB" id="A1KXE4"/>
    </source>
</evidence>
<evidence type="ECO:0000250" key="2">
    <source>
        <dbReference type="UniProtKB" id="D4AEP3"/>
    </source>
</evidence>
<evidence type="ECO:0000250" key="3">
    <source>
        <dbReference type="UniProtKB" id="Q80XQ8"/>
    </source>
</evidence>
<evidence type="ECO:0000255" key="4"/>
<evidence type="ECO:0000303" key="5">
    <source ref="2"/>
</evidence>
<evidence type="ECO:0000305" key="6"/>
<dbReference type="EMBL" id="AAFC03092902">
    <property type="status" value="NOT_ANNOTATED_CDS"/>
    <property type="molecule type" value="Genomic_DNA"/>
</dbReference>
<dbReference type="EMBL" id="BC153831">
    <property type="protein sequence ID" value="AAI53832.1"/>
    <property type="molecule type" value="mRNA"/>
</dbReference>
<dbReference type="RefSeq" id="NP_001103260.1">
    <molecule id="A8E639-2"/>
    <property type="nucleotide sequence ID" value="NM_001109790.1"/>
</dbReference>
<dbReference type="RefSeq" id="XP_005202253.1">
    <molecule id="A8E639-1"/>
    <property type="nucleotide sequence ID" value="XM_005202196.3"/>
</dbReference>
<dbReference type="FunCoup" id="A8E639">
    <property type="interactions" value="3761"/>
</dbReference>
<dbReference type="STRING" id="9913.ENSBTAP00000073995"/>
<dbReference type="GlyCosmos" id="A8E639">
    <property type="glycosylation" value="1 site, No reported glycans"/>
</dbReference>
<dbReference type="GlyGen" id="A8E639">
    <property type="glycosylation" value="1 site"/>
</dbReference>
<dbReference type="Ensembl" id="ENSBTAT00000051818.3">
    <molecule id="A8E639-2"/>
    <property type="protein sequence ID" value="ENSBTAP00000052234.1"/>
    <property type="gene ID" value="ENSBTAG00000034978.5"/>
</dbReference>
<dbReference type="Ensembl" id="ENSBTAT00000132007.1">
    <molecule id="A8E639-1"/>
    <property type="protein sequence ID" value="ENSBTAP00000098367.1"/>
    <property type="gene ID" value="ENSBTAG00000034978.5"/>
</dbReference>
<dbReference type="GeneID" id="505853"/>
<dbReference type="KEGG" id="bta:505853"/>
<dbReference type="CTD" id="130074"/>
<dbReference type="VEuPathDB" id="HostDB:ENSBTAG00000034978"/>
<dbReference type="GeneTree" id="ENSGT00390000005140"/>
<dbReference type="HOGENOM" id="CLU_065824_1_0_1"/>
<dbReference type="InParanoid" id="A8E639"/>
<dbReference type="OMA" id="AMYAPHI"/>
<dbReference type="OrthoDB" id="9893817at2759"/>
<dbReference type="TreeFam" id="TF331128"/>
<dbReference type="Proteomes" id="UP000009136">
    <property type="component" value="Chromosome 2"/>
</dbReference>
<dbReference type="Bgee" id="ENSBTAG00000034978">
    <property type="expression patterns" value="Expressed in vas deferens and 105 other cell types or tissues"/>
</dbReference>
<dbReference type="GO" id="GO:0030424">
    <property type="term" value="C:axon"/>
    <property type="evidence" value="ECO:0007669"/>
    <property type="project" value="UniProtKB-SubCell"/>
</dbReference>
<dbReference type="GO" id="GO:0048471">
    <property type="term" value="C:perinuclear region of cytoplasm"/>
    <property type="evidence" value="ECO:0007669"/>
    <property type="project" value="UniProtKB-SubCell"/>
</dbReference>
<dbReference type="GO" id="GO:0005886">
    <property type="term" value="C:plasma membrane"/>
    <property type="evidence" value="ECO:0007669"/>
    <property type="project" value="UniProtKB-SubCell"/>
</dbReference>
<dbReference type="InterPro" id="IPR029247">
    <property type="entry name" value="FAM168A/MANI"/>
</dbReference>
<dbReference type="PANTHER" id="PTHR31844">
    <property type="entry name" value="MYELIN-ASSOCIATED NEURITE-OUTGROWTH INHIBITOR-RELATED"/>
    <property type="match status" value="1"/>
</dbReference>
<dbReference type="Pfam" id="PF14944">
    <property type="entry name" value="TCRP1"/>
    <property type="match status" value="2"/>
</dbReference>
<reference key="1">
    <citation type="journal article" date="2009" name="Science">
        <title>The genome sequence of taurine cattle: a window to ruminant biology and evolution.</title>
        <authorList>
            <consortium name="The bovine genome sequencing and analysis consortium"/>
        </authorList>
    </citation>
    <scope>NUCLEOTIDE SEQUENCE [LARGE SCALE GENOMIC DNA]</scope>
    <source>
        <strain>Hereford</strain>
    </source>
</reference>
<reference key="2">
    <citation type="submission" date="2007-09" db="EMBL/GenBank/DDBJ databases">
        <authorList>
            <consortium name="NIH - Mammalian Gene Collection (MGC) project"/>
        </authorList>
    </citation>
    <scope>NUCLEOTIDE SEQUENCE [LARGE SCALE MRNA] (ISOFORM 2)</scope>
    <source>
        <strain>Hereford</strain>
        <tissue>Fetal pons</tissue>
    </source>
</reference>
<comment type="function">
    <text evidence="2">Inhibitor of neuronal axonal outgrowth. Acts as a negative regulator of CDC42 and STAT3 and a positive regulator of STMN2. Positive regulator of CDC27.</text>
</comment>
<comment type="subunit">
    <text evidence="1">May form homodimers. May interact with DAZAP2, FAM168A, PRDX6, RBM6, TMTC1 and YPEL2. Interacts with CDC27.</text>
</comment>
<comment type="subcellular location">
    <subcellularLocation>
        <location evidence="2">Cytoplasm</location>
        <location evidence="2">Perinuclear region</location>
    </subcellularLocation>
    <subcellularLocation>
        <location evidence="3">Cell membrane</location>
        <topology evidence="3">Multi-pass membrane protein</topology>
    </subcellularLocation>
    <subcellularLocation>
        <location evidence="3">Cell projection</location>
        <location evidence="3">Axon</location>
    </subcellularLocation>
    <text evidence="3">Expressed in neuronal cell bodies and axonal fibers.</text>
</comment>
<comment type="alternative products">
    <event type="alternative splicing"/>
    <isoform>
        <id>A8E639-1</id>
        <name>1</name>
        <sequence type="displayed"/>
    </isoform>
    <isoform>
        <id>A8E639-2</id>
        <name>2</name>
        <sequence type="described" ref="VSP_043988"/>
    </isoform>
</comment>
<comment type="PTM">
    <text evidence="2">N-glycosylated.</text>
</comment>
<comment type="similarity">
    <text evidence="6">Belongs to the FAM168 family.</text>
</comment>
<keyword id="KW-0007">Acetylation</keyword>
<keyword id="KW-0025">Alternative splicing</keyword>
<keyword id="KW-1003">Cell membrane</keyword>
<keyword id="KW-0966">Cell projection</keyword>
<keyword id="KW-0963">Cytoplasm</keyword>
<keyword id="KW-0325">Glycoprotein</keyword>
<keyword id="KW-0472">Membrane</keyword>
<keyword id="KW-0597">Phosphoprotein</keyword>
<keyword id="KW-1185">Reference proteome</keyword>
<keyword id="KW-0812">Transmembrane</keyword>
<keyword id="KW-1133">Transmembrane helix</keyword>